<comment type="function">
    <text evidence="5 6">A cytochrome P450 monooxygenase that catalyzes the in-chain oxidation of fatty acids (PubMed:19090726, PubMed:29018033). Catalyzes the hydroxylation of carbon-hydrogen bonds. Hydroxylates lauric and myristic acids predominantly at the omega-4 and omega-2 positions, respectively (PubMed:19090726, PubMed:29018033). Catalyzes the epoxidation of double bonds of polyunsaturated fatty acids (PUFA). Displays an absolute stereoselectivity in the epoxidation of arachidonic acid producing the 14(S),15(R)-epoxyeicosatrienoic acid (EET) enantiomer (PubMed:29018033). Mechanistically, uses molecular oxygen inserting one oxygen atom into a substrate, and reducing the second into a water molecule, with two electrons provided by NADPH via cytochrome P450 reductase (CPR; NADPH-ferrihemoprotein reductase) (PubMed:19090726, PubMed:29018033).</text>
</comment>
<comment type="catalytic activity">
    <reaction evidence="5 6">
        <text>an organic molecule + reduced [NADPH--hemoprotein reductase] + O2 = an alcohol + oxidized [NADPH--hemoprotein reductase] + H2O + H(+)</text>
        <dbReference type="Rhea" id="RHEA:17149"/>
        <dbReference type="Rhea" id="RHEA-COMP:11964"/>
        <dbReference type="Rhea" id="RHEA-COMP:11965"/>
        <dbReference type="ChEBI" id="CHEBI:15377"/>
        <dbReference type="ChEBI" id="CHEBI:15378"/>
        <dbReference type="ChEBI" id="CHEBI:15379"/>
        <dbReference type="ChEBI" id="CHEBI:30879"/>
        <dbReference type="ChEBI" id="CHEBI:57618"/>
        <dbReference type="ChEBI" id="CHEBI:58210"/>
        <dbReference type="ChEBI" id="CHEBI:142491"/>
        <dbReference type="EC" id="1.14.14.1"/>
    </reaction>
    <physiologicalReaction direction="left-to-right" evidence="10 11">
        <dbReference type="Rhea" id="RHEA:17150"/>
    </physiologicalReaction>
</comment>
<comment type="catalytic activity">
    <reaction evidence="5 6">
        <text>dodecanoate + reduced [NADPH--hemoprotein reductase] + O2 = 7-hydroxydodecanoate + oxidized [NADPH--hemoprotein reductase] + H2O + H(+)</text>
        <dbReference type="Rhea" id="RHEA:45084"/>
        <dbReference type="Rhea" id="RHEA-COMP:11964"/>
        <dbReference type="Rhea" id="RHEA-COMP:11965"/>
        <dbReference type="ChEBI" id="CHEBI:15377"/>
        <dbReference type="ChEBI" id="CHEBI:15378"/>
        <dbReference type="ChEBI" id="CHEBI:15379"/>
        <dbReference type="ChEBI" id="CHEBI:18262"/>
        <dbReference type="ChEBI" id="CHEBI:57618"/>
        <dbReference type="ChEBI" id="CHEBI:58210"/>
        <dbReference type="ChEBI" id="CHEBI:84921"/>
        <dbReference type="EC" id="1.14.14.130"/>
    </reaction>
    <physiologicalReaction direction="left-to-right" evidence="10 11">
        <dbReference type="Rhea" id="RHEA:45085"/>
    </physiologicalReaction>
</comment>
<comment type="catalytic activity">
    <reaction evidence="5 6">
        <text>dodecanoate + reduced [NADPH--hemoprotein reductase] + O2 = 8-hydroxydodecanoate + oxidized [NADPH--hemoprotein reductase] + H2O + H(+)</text>
        <dbReference type="Rhea" id="RHEA:66888"/>
        <dbReference type="Rhea" id="RHEA-COMP:11964"/>
        <dbReference type="Rhea" id="RHEA-COMP:11965"/>
        <dbReference type="ChEBI" id="CHEBI:15377"/>
        <dbReference type="ChEBI" id="CHEBI:15378"/>
        <dbReference type="ChEBI" id="CHEBI:15379"/>
        <dbReference type="ChEBI" id="CHEBI:18262"/>
        <dbReference type="ChEBI" id="CHEBI:57618"/>
        <dbReference type="ChEBI" id="CHEBI:58210"/>
        <dbReference type="ChEBI" id="CHEBI:167541"/>
    </reaction>
    <physiologicalReaction direction="left-to-right" evidence="10 11">
        <dbReference type="Rhea" id="RHEA:66889"/>
    </physiologicalReaction>
</comment>
<comment type="catalytic activity">
    <reaction evidence="5 6">
        <text>dodecanoate + reduced [NADPH--hemoprotein reductase] + O2 = 9-hydroxydodecanoate + oxidized [NADPH--hemoprotein reductase] + H2O + H(+)</text>
        <dbReference type="Rhea" id="RHEA:66872"/>
        <dbReference type="Rhea" id="RHEA-COMP:11964"/>
        <dbReference type="Rhea" id="RHEA-COMP:11965"/>
        <dbReference type="ChEBI" id="CHEBI:15377"/>
        <dbReference type="ChEBI" id="CHEBI:15378"/>
        <dbReference type="ChEBI" id="CHEBI:15379"/>
        <dbReference type="ChEBI" id="CHEBI:18262"/>
        <dbReference type="ChEBI" id="CHEBI:57618"/>
        <dbReference type="ChEBI" id="CHEBI:58210"/>
        <dbReference type="ChEBI" id="CHEBI:167543"/>
    </reaction>
    <physiologicalReaction direction="left-to-right" evidence="10 11">
        <dbReference type="Rhea" id="RHEA:66873"/>
    </physiologicalReaction>
</comment>
<comment type="catalytic activity">
    <reaction evidence="5 6">
        <text>dodecanoate + reduced [NADPH--hemoprotein reductase] + O2 = 10-hydroxydodecanoate + oxidized [NADPH--hemoprotein reductase] + H2O + H(+)</text>
        <dbReference type="Rhea" id="RHEA:66892"/>
        <dbReference type="Rhea" id="RHEA-COMP:11964"/>
        <dbReference type="Rhea" id="RHEA-COMP:11965"/>
        <dbReference type="ChEBI" id="CHEBI:15377"/>
        <dbReference type="ChEBI" id="CHEBI:15378"/>
        <dbReference type="ChEBI" id="CHEBI:15379"/>
        <dbReference type="ChEBI" id="CHEBI:18262"/>
        <dbReference type="ChEBI" id="CHEBI:57618"/>
        <dbReference type="ChEBI" id="CHEBI:58210"/>
        <dbReference type="ChEBI" id="CHEBI:167542"/>
    </reaction>
    <physiologicalReaction direction="left-to-right" evidence="10 11">
        <dbReference type="Rhea" id="RHEA:66893"/>
    </physiologicalReaction>
</comment>
<comment type="catalytic activity">
    <reaction evidence="6">
        <text>dodecanoate + reduced [NADPH--hemoprotein reductase] + O2 = 11-hydroxydodecanoate + oxidized [NADPH--hemoprotein reductase] + H2O + H(+)</text>
        <dbReference type="Rhea" id="RHEA:39751"/>
        <dbReference type="Rhea" id="RHEA-COMP:11964"/>
        <dbReference type="Rhea" id="RHEA-COMP:11965"/>
        <dbReference type="ChEBI" id="CHEBI:15377"/>
        <dbReference type="ChEBI" id="CHEBI:15378"/>
        <dbReference type="ChEBI" id="CHEBI:15379"/>
        <dbReference type="ChEBI" id="CHEBI:18262"/>
        <dbReference type="ChEBI" id="CHEBI:57618"/>
        <dbReference type="ChEBI" id="CHEBI:58210"/>
        <dbReference type="ChEBI" id="CHEBI:76628"/>
    </reaction>
    <physiologicalReaction direction="left-to-right" evidence="11">
        <dbReference type="Rhea" id="RHEA:39752"/>
    </physiologicalReaction>
</comment>
<comment type="catalytic activity">
    <reaction evidence="6">
        <text>tetradecanoate + reduced [NADPH--hemoprotein reductase] + O2 = 9-hydroxytetradecanoate + oxidized [NADPH--hemoprotein reductase] + H2O + H(+)</text>
        <dbReference type="Rhea" id="RHEA:66916"/>
        <dbReference type="Rhea" id="RHEA-COMP:11964"/>
        <dbReference type="Rhea" id="RHEA-COMP:11965"/>
        <dbReference type="ChEBI" id="CHEBI:15377"/>
        <dbReference type="ChEBI" id="CHEBI:15378"/>
        <dbReference type="ChEBI" id="CHEBI:15379"/>
        <dbReference type="ChEBI" id="CHEBI:30807"/>
        <dbReference type="ChEBI" id="CHEBI:57618"/>
        <dbReference type="ChEBI" id="CHEBI:58210"/>
        <dbReference type="ChEBI" id="CHEBI:167544"/>
    </reaction>
    <physiologicalReaction direction="left-to-right" evidence="11">
        <dbReference type="Rhea" id="RHEA:66917"/>
    </physiologicalReaction>
</comment>
<comment type="catalytic activity">
    <reaction evidence="5">
        <text>tetradecanoate + reduced [NADPH--hemoprotein reductase] + O2 = 10-hydroxytetradecanoate + oxidized [NADPH--hemoprotein reductase] + H2O + H(+)</text>
        <dbReference type="Rhea" id="RHEA:66880"/>
        <dbReference type="Rhea" id="RHEA-COMP:11964"/>
        <dbReference type="Rhea" id="RHEA-COMP:11965"/>
        <dbReference type="ChEBI" id="CHEBI:15377"/>
        <dbReference type="ChEBI" id="CHEBI:15378"/>
        <dbReference type="ChEBI" id="CHEBI:15379"/>
        <dbReference type="ChEBI" id="CHEBI:30807"/>
        <dbReference type="ChEBI" id="CHEBI:57618"/>
        <dbReference type="ChEBI" id="CHEBI:58210"/>
        <dbReference type="ChEBI" id="CHEBI:167545"/>
    </reaction>
    <physiologicalReaction direction="left-to-right" evidence="10">
        <dbReference type="Rhea" id="RHEA:66881"/>
    </physiologicalReaction>
</comment>
<comment type="catalytic activity">
    <reaction evidence="5">
        <text>tetradecanoate + reduced [NADPH--hemoprotein reductase] + O2 = 11-hydroxytetradecanoate + oxidized [NADPH--hemoprotein reductase] + H2O + H(+)</text>
        <dbReference type="Rhea" id="RHEA:66884"/>
        <dbReference type="Rhea" id="RHEA-COMP:11964"/>
        <dbReference type="Rhea" id="RHEA-COMP:11965"/>
        <dbReference type="ChEBI" id="CHEBI:15377"/>
        <dbReference type="ChEBI" id="CHEBI:15378"/>
        <dbReference type="ChEBI" id="CHEBI:15379"/>
        <dbReference type="ChEBI" id="CHEBI:30807"/>
        <dbReference type="ChEBI" id="CHEBI:57618"/>
        <dbReference type="ChEBI" id="CHEBI:58210"/>
        <dbReference type="ChEBI" id="CHEBI:167547"/>
    </reaction>
    <physiologicalReaction direction="left-to-right" evidence="10">
        <dbReference type="Rhea" id="RHEA:66885"/>
    </physiologicalReaction>
</comment>
<comment type="catalytic activity">
    <reaction evidence="5">
        <text>tetradecanoate + reduced [NADPH--hemoprotein reductase] + O2 = 12-hydroxytetradecanoate + oxidized [NADPH--hemoprotein reductase] + H2O + H(+)</text>
        <dbReference type="Rhea" id="RHEA:66876"/>
        <dbReference type="Rhea" id="RHEA-COMP:11964"/>
        <dbReference type="Rhea" id="RHEA-COMP:11965"/>
        <dbReference type="ChEBI" id="CHEBI:15377"/>
        <dbReference type="ChEBI" id="CHEBI:15378"/>
        <dbReference type="ChEBI" id="CHEBI:15379"/>
        <dbReference type="ChEBI" id="CHEBI:30807"/>
        <dbReference type="ChEBI" id="CHEBI:57618"/>
        <dbReference type="ChEBI" id="CHEBI:58210"/>
        <dbReference type="ChEBI" id="CHEBI:167546"/>
    </reaction>
    <physiologicalReaction direction="left-to-right" evidence="10">
        <dbReference type="Rhea" id="RHEA:66877"/>
    </physiologicalReaction>
</comment>
<comment type="catalytic activity">
    <reaction evidence="6">
        <text>(5Z,8Z,11Z,14Z)-eicosatetraenoate + reduced [NADPH--hemoprotein reductase] + O2 = (14S,15R)-epoxy-(5Z,8Z,11Z)-eicosatrienoate + oxidized [NADPH--hemoprotein reductase] + H2O + H(+)</text>
        <dbReference type="Rhea" id="RHEA:49856"/>
        <dbReference type="Rhea" id="RHEA-COMP:11964"/>
        <dbReference type="Rhea" id="RHEA-COMP:11965"/>
        <dbReference type="ChEBI" id="CHEBI:15377"/>
        <dbReference type="ChEBI" id="CHEBI:15378"/>
        <dbReference type="ChEBI" id="CHEBI:15379"/>
        <dbReference type="ChEBI" id="CHEBI:32395"/>
        <dbReference type="ChEBI" id="CHEBI:57618"/>
        <dbReference type="ChEBI" id="CHEBI:58210"/>
        <dbReference type="ChEBI" id="CHEBI:131964"/>
    </reaction>
    <physiologicalReaction direction="left-to-right" evidence="11">
        <dbReference type="Rhea" id="RHEA:49857"/>
    </physiologicalReaction>
</comment>
<comment type="cofactor">
    <cofactor evidence="2">
        <name>heme</name>
        <dbReference type="ChEBI" id="CHEBI:30413"/>
    </cofactor>
</comment>
<comment type="subcellular location">
    <subcellularLocation>
        <location evidence="4">Endoplasmic reticulum membrane</location>
        <topology evidence="4">Single-pass type II membrane protein</topology>
    </subcellularLocation>
    <subcellularLocation>
        <location evidence="4">Microsome membrane</location>
        <topology evidence="4">Single-pass type II membrane protein</topology>
    </subcellularLocation>
</comment>
<comment type="tissue specificity">
    <text evidence="4">Preferentially detected in breast carcinoma tissue and mammary gland, whereas only marginal expression is found in all other tested tissues.</text>
</comment>
<comment type="similarity">
    <text evidence="9">Belongs to the cytochrome P450 family.</text>
</comment>
<accession>Q86W10</accession>
<accession>Q5VVE4</accession>
<gene>
    <name evidence="7 12" type="primary">CYP4Z1</name>
    <name type="ORF">UNQ3060/PRO9882</name>
</gene>
<reference key="1">
    <citation type="journal article" date="2004" name="Cancer Res.">
        <title>Identification of a novel mammary-restricted cytochrome P450, CYP4Z1, with overexpression in breast carcinoma.</title>
        <authorList>
            <person name="Rieger M.A."/>
            <person name="Ebner R."/>
            <person name="Bell D.R."/>
            <person name="Kiessling A."/>
            <person name="Rohayem J."/>
            <person name="Schmitz M."/>
            <person name="Temme A."/>
            <person name="Rieber E.P."/>
            <person name="Weigle B."/>
        </authorList>
    </citation>
    <scope>NUCLEOTIDE SEQUENCE [MRNA]</scope>
    <scope>SUBCELLULAR LOCATION</scope>
    <scope>TISSUE SPECIFICITY</scope>
</reference>
<reference key="2">
    <citation type="journal article" date="2003" name="Genome Res.">
        <title>The secreted protein discovery initiative (SPDI), a large-scale effort to identify novel human secreted and transmembrane proteins: a bioinformatics assessment.</title>
        <authorList>
            <person name="Clark H.F."/>
            <person name="Gurney A.L."/>
            <person name="Abaya E."/>
            <person name="Baker K."/>
            <person name="Baldwin D.T."/>
            <person name="Brush J."/>
            <person name="Chen J."/>
            <person name="Chow B."/>
            <person name="Chui C."/>
            <person name="Crowley C."/>
            <person name="Currell B."/>
            <person name="Deuel B."/>
            <person name="Dowd P."/>
            <person name="Eaton D."/>
            <person name="Foster J.S."/>
            <person name="Grimaldi C."/>
            <person name="Gu Q."/>
            <person name="Hass P.E."/>
            <person name="Heldens S."/>
            <person name="Huang A."/>
            <person name="Kim H.S."/>
            <person name="Klimowski L."/>
            <person name="Jin Y."/>
            <person name="Johnson S."/>
            <person name="Lee J."/>
            <person name="Lewis L."/>
            <person name="Liao D."/>
            <person name="Mark M.R."/>
            <person name="Robbie E."/>
            <person name="Sanchez C."/>
            <person name="Schoenfeld J."/>
            <person name="Seshagiri S."/>
            <person name="Simmons L."/>
            <person name="Singh J."/>
            <person name="Smith V."/>
            <person name="Stinson J."/>
            <person name="Vagts A."/>
            <person name="Vandlen R.L."/>
            <person name="Watanabe C."/>
            <person name="Wieand D."/>
            <person name="Woods K."/>
            <person name="Xie M.-H."/>
            <person name="Yansura D.G."/>
            <person name="Yi S."/>
            <person name="Yu G."/>
            <person name="Yuan J."/>
            <person name="Zhang M."/>
            <person name="Zhang Z."/>
            <person name="Goddard A.D."/>
            <person name="Wood W.I."/>
            <person name="Godowski P.J."/>
            <person name="Gray A.M."/>
        </authorList>
    </citation>
    <scope>NUCLEOTIDE SEQUENCE [LARGE SCALE MRNA]</scope>
</reference>
<reference key="3">
    <citation type="journal article" date="2004" name="Nat. Genet.">
        <title>Complete sequencing and characterization of 21,243 full-length human cDNAs.</title>
        <authorList>
            <person name="Ota T."/>
            <person name="Suzuki Y."/>
            <person name="Nishikawa T."/>
            <person name="Otsuki T."/>
            <person name="Sugiyama T."/>
            <person name="Irie R."/>
            <person name="Wakamatsu A."/>
            <person name="Hayashi K."/>
            <person name="Sato H."/>
            <person name="Nagai K."/>
            <person name="Kimura K."/>
            <person name="Makita H."/>
            <person name="Sekine M."/>
            <person name="Obayashi M."/>
            <person name="Nishi T."/>
            <person name="Shibahara T."/>
            <person name="Tanaka T."/>
            <person name="Ishii S."/>
            <person name="Yamamoto J."/>
            <person name="Saito K."/>
            <person name="Kawai Y."/>
            <person name="Isono Y."/>
            <person name="Nakamura Y."/>
            <person name="Nagahari K."/>
            <person name="Murakami K."/>
            <person name="Yasuda T."/>
            <person name="Iwayanagi T."/>
            <person name="Wagatsuma M."/>
            <person name="Shiratori A."/>
            <person name="Sudo H."/>
            <person name="Hosoiri T."/>
            <person name="Kaku Y."/>
            <person name="Kodaira H."/>
            <person name="Kondo H."/>
            <person name="Sugawara M."/>
            <person name="Takahashi M."/>
            <person name="Kanda K."/>
            <person name="Yokoi T."/>
            <person name="Furuya T."/>
            <person name="Kikkawa E."/>
            <person name="Omura Y."/>
            <person name="Abe K."/>
            <person name="Kamihara K."/>
            <person name="Katsuta N."/>
            <person name="Sato K."/>
            <person name="Tanikawa M."/>
            <person name="Yamazaki M."/>
            <person name="Ninomiya K."/>
            <person name="Ishibashi T."/>
            <person name="Yamashita H."/>
            <person name="Murakawa K."/>
            <person name="Fujimori K."/>
            <person name="Tanai H."/>
            <person name="Kimata M."/>
            <person name="Watanabe M."/>
            <person name="Hiraoka S."/>
            <person name="Chiba Y."/>
            <person name="Ishida S."/>
            <person name="Ono Y."/>
            <person name="Takiguchi S."/>
            <person name="Watanabe S."/>
            <person name="Yosida M."/>
            <person name="Hotuta T."/>
            <person name="Kusano J."/>
            <person name="Kanehori K."/>
            <person name="Takahashi-Fujii A."/>
            <person name="Hara H."/>
            <person name="Tanase T.-O."/>
            <person name="Nomura Y."/>
            <person name="Togiya S."/>
            <person name="Komai F."/>
            <person name="Hara R."/>
            <person name="Takeuchi K."/>
            <person name="Arita M."/>
            <person name="Imose N."/>
            <person name="Musashino K."/>
            <person name="Yuuki H."/>
            <person name="Oshima A."/>
            <person name="Sasaki N."/>
            <person name="Aotsuka S."/>
            <person name="Yoshikawa Y."/>
            <person name="Matsunawa H."/>
            <person name="Ichihara T."/>
            <person name="Shiohata N."/>
            <person name="Sano S."/>
            <person name="Moriya S."/>
            <person name="Momiyama H."/>
            <person name="Satoh N."/>
            <person name="Takami S."/>
            <person name="Terashima Y."/>
            <person name="Suzuki O."/>
            <person name="Nakagawa S."/>
            <person name="Senoh A."/>
            <person name="Mizoguchi H."/>
            <person name="Goto Y."/>
            <person name="Shimizu F."/>
            <person name="Wakebe H."/>
            <person name="Hishigaki H."/>
            <person name="Watanabe T."/>
            <person name="Sugiyama A."/>
            <person name="Takemoto M."/>
            <person name="Kawakami B."/>
            <person name="Yamazaki M."/>
            <person name="Watanabe K."/>
            <person name="Kumagai A."/>
            <person name="Itakura S."/>
            <person name="Fukuzumi Y."/>
            <person name="Fujimori Y."/>
            <person name="Komiyama M."/>
            <person name="Tashiro H."/>
            <person name="Tanigami A."/>
            <person name="Fujiwara T."/>
            <person name="Ono T."/>
            <person name="Yamada K."/>
            <person name="Fujii Y."/>
            <person name="Ozaki K."/>
            <person name="Hirao M."/>
            <person name="Ohmori Y."/>
            <person name="Kawabata A."/>
            <person name="Hikiji T."/>
            <person name="Kobatake N."/>
            <person name="Inagaki H."/>
            <person name="Ikema Y."/>
            <person name="Okamoto S."/>
            <person name="Okitani R."/>
            <person name="Kawakami T."/>
            <person name="Noguchi S."/>
            <person name="Itoh T."/>
            <person name="Shigeta K."/>
            <person name="Senba T."/>
            <person name="Matsumura K."/>
            <person name="Nakajima Y."/>
            <person name="Mizuno T."/>
            <person name="Morinaga M."/>
            <person name="Sasaki M."/>
            <person name="Togashi T."/>
            <person name="Oyama M."/>
            <person name="Hata H."/>
            <person name="Watanabe M."/>
            <person name="Komatsu T."/>
            <person name="Mizushima-Sugano J."/>
            <person name="Satoh T."/>
            <person name="Shirai Y."/>
            <person name="Takahashi Y."/>
            <person name="Nakagawa K."/>
            <person name="Okumura K."/>
            <person name="Nagase T."/>
            <person name="Nomura N."/>
            <person name="Kikuchi H."/>
            <person name="Masuho Y."/>
            <person name="Yamashita R."/>
            <person name="Nakai K."/>
            <person name="Yada T."/>
            <person name="Nakamura Y."/>
            <person name="Ohara O."/>
            <person name="Isogai T."/>
            <person name="Sugano S."/>
        </authorList>
    </citation>
    <scope>NUCLEOTIDE SEQUENCE [LARGE SCALE MRNA]</scope>
    <source>
        <tissue>Mammary gland</tissue>
    </source>
</reference>
<reference key="4">
    <citation type="journal article" date="2006" name="Nature">
        <title>The DNA sequence and biological annotation of human chromosome 1.</title>
        <authorList>
            <person name="Gregory S.G."/>
            <person name="Barlow K.F."/>
            <person name="McLay K.E."/>
            <person name="Kaul R."/>
            <person name="Swarbreck D."/>
            <person name="Dunham A."/>
            <person name="Scott C.E."/>
            <person name="Howe K.L."/>
            <person name="Woodfine K."/>
            <person name="Spencer C.C.A."/>
            <person name="Jones M.C."/>
            <person name="Gillson C."/>
            <person name="Searle S."/>
            <person name="Zhou Y."/>
            <person name="Kokocinski F."/>
            <person name="McDonald L."/>
            <person name="Evans R."/>
            <person name="Phillips K."/>
            <person name="Atkinson A."/>
            <person name="Cooper R."/>
            <person name="Jones C."/>
            <person name="Hall R.E."/>
            <person name="Andrews T.D."/>
            <person name="Lloyd C."/>
            <person name="Ainscough R."/>
            <person name="Almeida J.P."/>
            <person name="Ambrose K.D."/>
            <person name="Anderson F."/>
            <person name="Andrew R.W."/>
            <person name="Ashwell R.I.S."/>
            <person name="Aubin K."/>
            <person name="Babbage A.K."/>
            <person name="Bagguley C.L."/>
            <person name="Bailey J."/>
            <person name="Beasley H."/>
            <person name="Bethel G."/>
            <person name="Bird C.P."/>
            <person name="Bray-Allen S."/>
            <person name="Brown J.Y."/>
            <person name="Brown A.J."/>
            <person name="Buckley D."/>
            <person name="Burton J."/>
            <person name="Bye J."/>
            <person name="Carder C."/>
            <person name="Chapman J.C."/>
            <person name="Clark S.Y."/>
            <person name="Clarke G."/>
            <person name="Clee C."/>
            <person name="Cobley V."/>
            <person name="Collier R.E."/>
            <person name="Corby N."/>
            <person name="Coville G.J."/>
            <person name="Davies J."/>
            <person name="Deadman R."/>
            <person name="Dunn M."/>
            <person name="Earthrowl M."/>
            <person name="Ellington A.G."/>
            <person name="Errington H."/>
            <person name="Frankish A."/>
            <person name="Frankland J."/>
            <person name="French L."/>
            <person name="Garner P."/>
            <person name="Garnett J."/>
            <person name="Gay L."/>
            <person name="Ghori M.R.J."/>
            <person name="Gibson R."/>
            <person name="Gilby L.M."/>
            <person name="Gillett W."/>
            <person name="Glithero R.J."/>
            <person name="Grafham D.V."/>
            <person name="Griffiths C."/>
            <person name="Griffiths-Jones S."/>
            <person name="Grocock R."/>
            <person name="Hammond S."/>
            <person name="Harrison E.S.I."/>
            <person name="Hart E."/>
            <person name="Haugen E."/>
            <person name="Heath P.D."/>
            <person name="Holmes S."/>
            <person name="Holt K."/>
            <person name="Howden P.J."/>
            <person name="Hunt A.R."/>
            <person name="Hunt S.E."/>
            <person name="Hunter G."/>
            <person name="Isherwood J."/>
            <person name="James R."/>
            <person name="Johnson C."/>
            <person name="Johnson D."/>
            <person name="Joy A."/>
            <person name="Kay M."/>
            <person name="Kershaw J.K."/>
            <person name="Kibukawa M."/>
            <person name="Kimberley A.M."/>
            <person name="King A."/>
            <person name="Knights A.J."/>
            <person name="Lad H."/>
            <person name="Laird G."/>
            <person name="Lawlor S."/>
            <person name="Leongamornlert D.A."/>
            <person name="Lloyd D.M."/>
            <person name="Loveland J."/>
            <person name="Lovell J."/>
            <person name="Lush M.J."/>
            <person name="Lyne R."/>
            <person name="Martin S."/>
            <person name="Mashreghi-Mohammadi M."/>
            <person name="Matthews L."/>
            <person name="Matthews N.S.W."/>
            <person name="McLaren S."/>
            <person name="Milne S."/>
            <person name="Mistry S."/>
            <person name="Moore M.J.F."/>
            <person name="Nickerson T."/>
            <person name="O'Dell C.N."/>
            <person name="Oliver K."/>
            <person name="Palmeiri A."/>
            <person name="Palmer S.A."/>
            <person name="Parker A."/>
            <person name="Patel D."/>
            <person name="Pearce A.V."/>
            <person name="Peck A.I."/>
            <person name="Pelan S."/>
            <person name="Phelps K."/>
            <person name="Phillimore B.J."/>
            <person name="Plumb R."/>
            <person name="Rajan J."/>
            <person name="Raymond C."/>
            <person name="Rouse G."/>
            <person name="Saenphimmachak C."/>
            <person name="Sehra H.K."/>
            <person name="Sheridan E."/>
            <person name="Shownkeen R."/>
            <person name="Sims S."/>
            <person name="Skuce C.D."/>
            <person name="Smith M."/>
            <person name="Steward C."/>
            <person name="Subramanian S."/>
            <person name="Sycamore N."/>
            <person name="Tracey A."/>
            <person name="Tromans A."/>
            <person name="Van Helmond Z."/>
            <person name="Wall M."/>
            <person name="Wallis J.M."/>
            <person name="White S."/>
            <person name="Whitehead S.L."/>
            <person name="Wilkinson J.E."/>
            <person name="Willey D.L."/>
            <person name="Williams H."/>
            <person name="Wilming L."/>
            <person name="Wray P.W."/>
            <person name="Wu Z."/>
            <person name="Coulson A."/>
            <person name="Vaudin M."/>
            <person name="Sulston J.E."/>
            <person name="Durbin R.M."/>
            <person name="Hubbard T."/>
            <person name="Wooster R."/>
            <person name="Dunham I."/>
            <person name="Carter N.P."/>
            <person name="McVean G."/>
            <person name="Ross M.T."/>
            <person name="Harrow J."/>
            <person name="Olson M.V."/>
            <person name="Beck S."/>
            <person name="Rogers J."/>
            <person name="Bentley D.R."/>
        </authorList>
    </citation>
    <scope>NUCLEOTIDE SEQUENCE [LARGE SCALE GENOMIC DNA]</scope>
</reference>
<reference key="5">
    <citation type="journal article" date="2009" name="Biol. Chem.">
        <title>Human CYP4Z1 catalyzes the in-chain hydroxylation of lauric acid and myristic acid.</title>
        <authorList>
            <person name="Zoellner A."/>
            <person name="Dragan C.A."/>
            <person name="Pistorius D."/>
            <person name="Mueller R."/>
            <person name="Bode H.B."/>
            <person name="Peters F.T."/>
            <person name="Maurer H.H."/>
            <person name="Bureik M."/>
        </authorList>
    </citation>
    <scope>FUNCTION</scope>
    <scope>CATALYTIC ACTIVITY</scope>
</reference>
<reference key="6">
    <citation type="journal article" date="2017" name="Drug Metab. Dispos.">
        <title>Expression and Functional Characterization of Breast Cancer-Associated Cytochrome P450 4Z1 in Saccharomyces cerevisiae.</title>
        <authorList>
            <person name="McDonald M.G."/>
            <person name="Ray S."/>
            <person name="Amorosi C.J."/>
            <person name="Sitko K.A."/>
            <person name="Kowalski J.P."/>
            <person name="Paco L."/>
            <person name="Nath A."/>
            <person name="Gallis B."/>
            <person name="Totah R.A."/>
            <person name="Dunham M.J."/>
            <person name="Fowler D.M."/>
            <person name="Rettie A.E."/>
        </authorList>
    </citation>
    <scope>FUNCTION</scope>
    <scope>CATALYTIC ACTIVITY</scope>
</reference>
<evidence type="ECO:0000250" key="1"/>
<evidence type="ECO:0000250" key="2">
    <source>
        <dbReference type="UniProtKB" id="Q02928"/>
    </source>
</evidence>
<evidence type="ECO:0000255" key="3"/>
<evidence type="ECO:0000269" key="4">
    <source>
    </source>
</evidence>
<evidence type="ECO:0000269" key="5">
    <source>
    </source>
</evidence>
<evidence type="ECO:0000269" key="6">
    <source>
    </source>
</evidence>
<evidence type="ECO:0000303" key="7">
    <source>
    </source>
</evidence>
<evidence type="ECO:0000303" key="8">
    <source>
    </source>
</evidence>
<evidence type="ECO:0000305" key="9"/>
<evidence type="ECO:0000305" key="10">
    <source>
    </source>
</evidence>
<evidence type="ECO:0000305" key="11">
    <source>
    </source>
</evidence>
<evidence type="ECO:0000312" key="12">
    <source>
        <dbReference type="HGNC" id="HGNC:20583"/>
    </source>
</evidence>
<protein>
    <recommendedName>
        <fullName evidence="8">Cytochrome P450 4Z1</fullName>
        <ecNumber evidence="5 6">1.14.14.1</ecNumber>
    </recommendedName>
    <alternativeName>
        <fullName>CYPIVZ1</fullName>
    </alternativeName>
    <alternativeName>
        <fullName evidence="10 11">Laurate 7-monooxygenase</fullName>
        <ecNumber evidence="5 6">1.14.14.130</ecNumber>
    </alternativeName>
</protein>
<feature type="chain" id="PRO_0000051864" description="Cytochrome P450 4Z1">
    <location>
        <begin position="1"/>
        <end position="505"/>
    </location>
</feature>
<feature type="topological domain" description="Cytoplasmic" evidence="3">
    <location>
        <begin position="1"/>
        <end position="9"/>
    </location>
</feature>
<feature type="transmembrane region" description="Helical; Signal-anchor for type II membrane protein" evidence="3">
    <location>
        <begin position="10"/>
        <end position="30"/>
    </location>
</feature>
<feature type="topological domain" description="Lumenal" evidence="3">
    <location>
        <begin position="31"/>
        <end position="505"/>
    </location>
</feature>
<feature type="binding site" description="axial binding residue" evidence="1">
    <location>
        <position position="452"/>
    </location>
    <ligand>
        <name>heme</name>
        <dbReference type="ChEBI" id="CHEBI:30413"/>
    </ligand>
    <ligandPart>
        <name>Fe</name>
        <dbReference type="ChEBI" id="CHEBI:18248"/>
    </ligandPart>
</feature>
<feature type="sequence variant" id="VAR_048461" description="In dbSNP:rs28463559.">
    <original>P</original>
    <variation>L</variation>
    <location>
        <position position="393"/>
    </location>
</feature>
<dbReference type="EC" id="1.14.14.1" evidence="5 6"/>
<dbReference type="EC" id="1.14.14.130" evidence="5 6"/>
<dbReference type="EMBL" id="AY262056">
    <property type="protein sequence ID" value="AAO89257.1"/>
    <property type="molecule type" value="mRNA"/>
</dbReference>
<dbReference type="EMBL" id="AY358631">
    <property type="protein sequence ID" value="AAQ88994.1"/>
    <property type="molecule type" value="mRNA"/>
</dbReference>
<dbReference type="EMBL" id="AK292175">
    <property type="protein sequence ID" value="BAF84864.1"/>
    <property type="molecule type" value="mRNA"/>
</dbReference>
<dbReference type="EMBL" id="AL450996">
    <property type="protein sequence ID" value="CAH71036.1"/>
    <property type="molecule type" value="Genomic_DNA"/>
</dbReference>
<dbReference type="EMBL" id="AL135960">
    <property type="protein sequence ID" value="CAH71036.1"/>
    <property type="status" value="JOINED"/>
    <property type="molecule type" value="Genomic_DNA"/>
</dbReference>
<dbReference type="EMBL" id="AL135960">
    <property type="protein sequence ID" value="CAI19734.1"/>
    <property type="molecule type" value="Genomic_DNA"/>
</dbReference>
<dbReference type="EMBL" id="AL450996">
    <property type="protein sequence ID" value="CAI19734.1"/>
    <property type="status" value="JOINED"/>
    <property type="molecule type" value="Genomic_DNA"/>
</dbReference>
<dbReference type="CCDS" id="CCDS545.1"/>
<dbReference type="RefSeq" id="NP_835235.1">
    <property type="nucleotide sequence ID" value="NM_178134.3"/>
</dbReference>
<dbReference type="SMR" id="Q86W10"/>
<dbReference type="FunCoup" id="Q86W10">
    <property type="interactions" value="76"/>
</dbReference>
<dbReference type="STRING" id="9606.ENSP00000334246"/>
<dbReference type="BindingDB" id="Q86W10"/>
<dbReference type="ChEMBL" id="CHEMBL4523375"/>
<dbReference type="GuidetoPHARMACOLOGY" id="1352"/>
<dbReference type="iPTMnet" id="Q86W10"/>
<dbReference type="PhosphoSitePlus" id="Q86W10"/>
<dbReference type="BioMuta" id="CYP4Z1"/>
<dbReference type="DMDM" id="48428052"/>
<dbReference type="jPOST" id="Q86W10"/>
<dbReference type="MassIVE" id="Q86W10"/>
<dbReference type="PaxDb" id="9606-ENSP00000334246"/>
<dbReference type="PeptideAtlas" id="Q86W10"/>
<dbReference type="ProteomicsDB" id="70100"/>
<dbReference type="Antibodypedia" id="32850">
    <property type="antibodies" value="142 antibodies from 26 providers"/>
</dbReference>
<dbReference type="DNASU" id="199974"/>
<dbReference type="Ensembl" id="ENST00000334194.4">
    <property type="protein sequence ID" value="ENSP00000334246.3"/>
    <property type="gene ID" value="ENSG00000186160.5"/>
</dbReference>
<dbReference type="GeneID" id="199974"/>
<dbReference type="KEGG" id="hsa:199974"/>
<dbReference type="MANE-Select" id="ENST00000334194.4">
    <property type="protein sequence ID" value="ENSP00000334246.3"/>
    <property type="RefSeq nucleotide sequence ID" value="NM_178134.3"/>
    <property type="RefSeq protein sequence ID" value="NP_835235.1"/>
</dbReference>
<dbReference type="UCSC" id="uc001cqu.2">
    <property type="organism name" value="human"/>
</dbReference>
<dbReference type="AGR" id="HGNC:20583"/>
<dbReference type="CTD" id="199974"/>
<dbReference type="DisGeNET" id="199974"/>
<dbReference type="GeneCards" id="CYP4Z1"/>
<dbReference type="HGNC" id="HGNC:20583">
    <property type="gene designation" value="CYP4Z1"/>
</dbReference>
<dbReference type="HPA" id="ENSG00000186160">
    <property type="expression patterns" value="Tissue enhanced (breast)"/>
</dbReference>
<dbReference type="MIM" id="618953">
    <property type="type" value="gene"/>
</dbReference>
<dbReference type="neXtProt" id="NX_Q86W10"/>
<dbReference type="OpenTargets" id="ENSG00000186160"/>
<dbReference type="PharmGKB" id="PA134941057"/>
<dbReference type="VEuPathDB" id="HostDB:ENSG00000186160"/>
<dbReference type="eggNOG" id="KOG0157">
    <property type="taxonomic scope" value="Eukaryota"/>
</dbReference>
<dbReference type="GeneTree" id="ENSGT00940000160927"/>
<dbReference type="HOGENOM" id="CLU_001570_5_1_1"/>
<dbReference type="InParanoid" id="Q86W10"/>
<dbReference type="OMA" id="LHHNDLV"/>
<dbReference type="OrthoDB" id="1470350at2759"/>
<dbReference type="PAN-GO" id="Q86W10">
    <property type="GO annotations" value="0 GO annotations based on evolutionary models"/>
</dbReference>
<dbReference type="PhylomeDB" id="Q86W10"/>
<dbReference type="TreeFam" id="TF105088"/>
<dbReference type="PathwayCommons" id="Q86W10"/>
<dbReference type="BioGRID-ORCS" id="199974">
    <property type="hits" value="18 hits in 1142 CRISPR screens"/>
</dbReference>
<dbReference type="GeneWiki" id="CYP4Z1"/>
<dbReference type="GenomeRNAi" id="199974"/>
<dbReference type="Pharos" id="Q86W10">
    <property type="development level" value="Tchem"/>
</dbReference>
<dbReference type="PRO" id="PR:Q86W10"/>
<dbReference type="Proteomes" id="UP000005640">
    <property type="component" value="Chromosome 1"/>
</dbReference>
<dbReference type="RNAct" id="Q86W10">
    <property type="molecule type" value="protein"/>
</dbReference>
<dbReference type="Bgee" id="ENSG00000186160">
    <property type="expression patterns" value="Expressed in male germ line stem cell (sensu Vertebrata) in testis and 93 other cell types or tissues"/>
</dbReference>
<dbReference type="GO" id="GO:0005789">
    <property type="term" value="C:endoplasmic reticulum membrane"/>
    <property type="evidence" value="ECO:0000314"/>
    <property type="project" value="UniProtKB"/>
</dbReference>
<dbReference type="GO" id="GO:0008404">
    <property type="term" value="F:arachidonate 14,15-epoxygenase activity"/>
    <property type="evidence" value="ECO:0000314"/>
    <property type="project" value="UniProtKB"/>
</dbReference>
<dbReference type="GO" id="GO:0052722">
    <property type="term" value="F:fatty acid in-chain hydroxylase activity"/>
    <property type="evidence" value="ECO:0000314"/>
    <property type="project" value="UniProtKB"/>
</dbReference>
<dbReference type="GO" id="GO:0020037">
    <property type="term" value="F:heme binding"/>
    <property type="evidence" value="ECO:0007669"/>
    <property type="project" value="InterPro"/>
</dbReference>
<dbReference type="GO" id="GO:0005506">
    <property type="term" value="F:iron ion binding"/>
    <property type="evidence" value="ECO:0007669"/>
    <property type="project" value="InterPro"/>
</dbReference>
<dbReference type="GO" id="GO:0016712">
    <property type="term" value="F:oxidoreductase activity, acting on paired donors, with incorporation or reduction of molecular oxygen, reduced flavin or flavoprotein as one donor, and incorporation of one atom of oxygen"/>
    <property type="evidence" value="ECO:0007669"/>
    <property type="project" value="UniProtKB-EC"/>
</dbReference>
<dbReference type="GO" id="GO:0019369">
    <property type="term" value="P:arachidonate metabolic process"/>
    <property type="evidence" value="ECO:0000314"/>
    <property type="project" value="UniProtKB"/>
</dbReference>
<dbReference type="GO" id="GO:0048252">
    <property type="term" value="P:lauric acid metabolic process"/>
    <property type="evidence" value="ECO:0000314"/>
    <property type="project" value="UniProtKB"/>
</dbReference>
<dbReference type="CDD" id="cd20678">
    <property type="entry name" value="CYP4B-like"/>
    <property type="match status" value="1"/>
</dbReference>
<dbReference type="FunFam" id="1.10.630.10:FF:000005">
    <property type="entry name" value="cytochrome P450 4F22 isoform X2"/>
    <property type="match status" value="1"/>
</dbReference>
<dbReference type="Gene3D" id="1.10.630.10">
    <property type="entry name" value="Cytochrome P450"/>
    <property type="match status" value="1"/>
</dbReference>
<dbReference type="InterPro" id="IPR001128">
    <property type="entry name" value="Cyt_P450"/>
</dbReference>
<dbReference type="InterPro" id="IPR017972">
    <property type="entry name" value="Cyt_P450_CS"/>
</dbReference>
<dbReference type="InterPro" id="IPR002401">
    <property type="entry name" value="Cyt_P450_E_grp-I"/>
</dbReference>
<dbReference type="InterPro" id="IPR036396">
    <property type="entry name" value="Cyt_P450_sf"/>
</dbReference>
<dbReference type="InterPro" id="IPR050196">
    <property type="entry name" value="Cytochrome_P450_Monoox"/>
</dbReference>
<dbReference type="PANTHER" id="PTHR24291:SF63">
    <property type="entry name" value="CYTOCHROME P450 4X1-RELATED"/>
    <property type="match status" value="1"/>
</dbReference>
<dbReference type="PANTHER" id="PTHR24291">
    <property type="entry name" value="CYTOCHROME P450 FAMILY 4"/>
    <property type="match status" value="1"/>
</dbReference>
<dbReference type="Pfam" id="PF00067">
    <property type="entry name" value="p450"/>
    <property type="match status" value="1"/>
</dbReference>
<dbReference type="PRINTS" id="PR00463">
    <property type="entry name" value="EP450I"/>
</dbReference>
<dbReference type="PRINTS" id="PR00385">
    <property type="entry name" value="P450"/>
</dbReference>
<dbReference type="SUPFAM" id="SSF48264">
    <property type="entry name" value="Cytochrome P450"/>
    <property type="match status" value="1"/>
</dbReference>
<dbReference type="PROSITE" id="PS00086">
    <property type="entry name" value="CYTOCHROME_P450"/>
    <property type="match status" value="1"/>
</dbReference>
<keyword id="KW-0256">Endoplasmic reticulum</keyword>
<keyword id="KW-0276">Fatty acid metabolism</keyword>
<keyword id="KW-0349">Heme</keyword>
<keyword id="KW-0408">Iron</keyword>
<keyword id="KW-0443">Lipid metabolism</keyword>
<keyword id="KW-0472">Membrane</keyword>
<keyword id="KW-0479">Metal-binding</keyword>
<keyword id="KW-0492">Microsome</keyword>
<keyword id="KW-0503">Monooxygenase</keyword>
<keyword id="KW-0560">Oxidoreductase</keyword>
<keyword id="KW-1267">Proteomics identification</keyword>
<keyword id="KW-1185">Reference proteome</keyword>
<keyword id="KW-0735">Signal-anchor</keyword>
<keyword id="KW-0812">Transmembrane</keyword>
<keyword id="KW-1133">Transmembrane helix</keyword>
<sequence length="505" mass="59086">MEPSWLQELMAHPFLLLILLCMSLLLFQVIRLYQRRRWMIRALHLFPAPPAHWFYGHKEFYPVKEFEVYHKLMEKYPCAVPLWVGPFTMFFSVHDPDYAKILLKRQDPKSAVSHKILESWVGRGLVTLDGSKWKKHRQIVKPGFNISILKIFITMMSESVRMMLNKWEEHIAQNSRLELFQHVSLMTLDSIMKCAFSHQGSIQLDSTLDSYLKAVFNLSKISNQRMNNFLHHNDLVFKFSSQGQIFSKFNQELHQFTEKVIQDRKESLKDKLKQDTTQKRRWDFLDILLSAKSENTKDFSEADLQAEVKTFMFAGHDTTSSAISWILYCLAKYPEHQQRCRDEIRELLGDGSSITWEHLSQMPYTTMCIKECLRLYAPVVNISRLLDKPITFPDGRSLPAGITVFINIWALHHNPYFWEDPQVFNPLRFSRENSEKIHPYAFIPFSAGLRNCIGQHFAIIECKVAVALTLLRFKLAPDHSRPPQPVRQVVLKSKNGIHVFAKKVC</sequence>
<organism>
    <name type="scientific">Homo sapiens</name>
    <name type="common">Human</name>
    <dbReference type="NCBI Taxonomy" id="9606"/>
    <lineage>
        <taxon>Eukaryota</taxon>
        <taxon>Metazoa</taxon>
        <taxon>Chordata</taxon>
        <taxon>Craniata</taxon>
        <taxon>Vertebrata</taxon>
        <taxon>Euteleostomi</taxon>
        <taxon>Mammalia</taxon>
        <taxon>Eutheria</taxon>
        <taxon>Euarchontoglires</taxon>
        <taxon>Primates</taxon>
        <taxon>Haplorrhini</taxon>
        <taxon>Catarrhini</taxon>
        <taxon>Hominidae</taxon>
        <taxon>Homo</taxon>
    </lineage>
</organism>
<name>CP4Z1_HUMAN</name>
<proteinExistence type="evidence at protein level"/>